<dbReference type="EC" id="6.3.2.9" evidence="1"/>
<dbReference type="EMBL" id="FM178379">
    <property type="protein sequence ID" value="CAQ80330.1"/>
    <property type="molecule type" value="Genomic_DNA"/>
</dbReference>
<dbReference type="RefSeq" id="WP_012551101.1">
    <property type="nucleotide sequence ID" value="NC_011312.1"/>
</dbReference>
<dbReference type="SMR" id="B6ELH7"/>
<dbReference type="KEGG" id="vsa:VSAL_I2646"/>
<dbReference type="eggNOG" id="COG0771">
    <property type="taxonomic scope" value="Bacteria"/>
</dbReference>
<dbReference type="HOGENOM" id="CLU_032540_1_0_6"/>
<dbReference type="UniPathway" id="UPA00219"/>
<dbReference type="Proteomes" id="UP000001730">
    <property type="component" value="Chromosome 1"/>
</dbReference>
<dbReference type="GO" id="GO:0005737">
    <property type="term" value="C:cytoplasm"/>
    <property type="evidence" value="ECO:0007669"/>
    <property type="project" value="UniProtKB-SubCell"/>
</dbReference>
<dbReference type="GO" id="GO:0005524">
    <property type="term" value="F:ATP binding"/>
    <property type="evidence" value="ECO:0007669"/>
    <property type="project" value="UniProtKB-UniRule"/>
</dbReference>
<dbReference type="GO" id="GO:0008764">
    <property type="term" value="F:UDP-N-acetylmuramoylalanine-D-glutamate ligase activity"/>
    <property type="evidence" value="ECO:0007669"/>
    <property type="project" value="UniProtKB-UniRule"/>
</dbReference>
<dbReference type="GO" id="GO:0051301">
    <property type="term" value="P:cell division"/>
    <property type="evidence" value="ECO:0007669"/>
    <property type="project" value="UniProtKB-KW"/>
</dbReference>
<dbReference type="GO" id="GO:0071555">
    <property type="term" value="P:cell wall organization"/>
    <property type="evidence" value="ECO:0007669"/>
    <property type="project" value="UniProtKB-KW"/>
</dbReference>
<dbReference type="GO" id="GO:0009252">
    <property type="term" value="P:peptidoglycan biosynthetic process"/>
    <property type="evidence" value="ECO:0007669"/>
    <property type="project" value="UniProtKB-UniRule"/>
</dbReference>
<dbReference type="GO" id="GO:0008360">
    <property type="term" value="P:regulation of cell shape"/>
    <property type="evidence" value="ECO:0007669"/>
    <property type="project" value="UniProtKB-KW"/>
</dbReference>
<dbReference type="Gene3D" id="3.90.190.20">
    <property type="entry name" value="Mur ligase, C-terminal domain"/>
    <property type="match status" value="1"/>
</dbReference>
<dbReference type="Gene3D" id="3.40.1190.10">
    <property type="entry name" value="Mur-like, catalytic domain"/>
    <property type="match status" value="1"/>
</dbReference>
<dbReference type="Gene3D" id="3.40.50.720">
    <property type="entry name" value="NAD(P)-binding Rossmann-like Domain"/>
    <property type="match status" value="1"/>
</dbReference>
<dbReference type="HAMAP" id="MF_00639">
    <property type="entry name" value="MurD"/>
    <property type="match status" value="1"/>
</dbReference>
<dbReference type="InterPro" id="IPR036565">
    <property type="entry name" value="Mur-like_cat_sf"/>
</dbReference>
<dbReference type="InterPro" id="IPR004101">
    <property type="entry name" value="Mur_ligase_C"/>
</dbReference>
<dbReference type="InterPro" id="IPR036615">
    <property type="entry name" value="Mur_ligase_C_dom_sf"/>
</dbReference>
<dbReference type="InterPro" id="IPR013221">
    <property type="entry name" value="Mur_ligase_cen"/>
</dbReference>
<dbReference type="InterPro" id="IPR005762">
    <property type="entry name" value="MurD"/>
</dbReference>
<dbReference type="NCBIfam" id="TIGR01087">
    <property type="entry name" value="murD"/>
    <property type="match status" value="1"/>
</dbReference>
<dbReference type="PANTHER" id="PTHR43692">
    <property type="entry name" value="UDP-N-ACETYLMURAMOYLALANINE--D-GLUTAMATE LIGASE"/>
    <property type="match status" value="1"/>
</dbReference>
<dbReference type="PANTHER" id="PTHR43692:SF1">
    <property type="entry name" value="UDP-N-ACETYLMURAMOYLALANINE--D-GLUTAMATE LIGASE"/>
    <property type="match status" value="1"/>
</dbReference>
<dbReference type="Pfam" id="PF02875">
    <property type="entry name" value="Mur_ligase_C"/>
    <property type="match status" value="1"/>
</dbReference>
<dbReference type="Pfam" id="PF08245">
    <property type="entry name" value="Mur_ligase_M"/>
    <property type="match status" value="1"/>
</dbReference>
<dbReference type="Pfam" id="PF21799">
    <property type="entry name" value="MurD-like_N"/>
    <property type="match status" value="1"/>
</dbReference>
<dbReference type="SUPFAM" id="SSF51984">
    <property type="entry name" value="MurCD N-terminal domain"/>
    <property type="match status" value="1"/>
</dbReference>
<dbReference type="SUPFAM" id="SSF53623">
    <property type="entry name" value="MurD-like peptide ligases, catalytic domain"/>
    <property type="match status" value="1"/>
</dbReference>
<dbReference type="SUPFAM" id="SSF53244">
    <property type="entry name" value="MurD-like peptide ligases, peptide-binding domain"/>
    <property type="match status" value="1"/>
</dbReference>
<organism>
    <name type="scientific">Aliivibrio salmonicida (strain LFI1238)</name>
    <name type="common">Vibrio salmonicida (strain LFI1238)</name>
    <dbReference type="NCBI Taxonomy" id="316275"/>
    <lineage>
        <taxon>Bacteria</taxon>
        <taxon>Pseudomonadati</taxon>
        <taxon>Pseudomonadota</taxon>
        <taxon>Gammaproteobacteria</taxon>
        <taxon>Vibrionales</taxon>
        <taxon>Vibrionaceae</taxon>
        <taxon>Aliivibrio</taxon>
    </lineage>
</organism>
<comment type="function">
    <text evidence="1">Cell wall formation. Catalyzes the addition of glutamate to the nucleotide precursor UDP-N-acetylmuramoyl-L-alanine (UMA).</text>
</comment>
<comment type="catalytic activity">
    <reaction evidence="1">
        <text>UDP-N-acetyl-alpha-D-muramoyl-L-alanine + D-glutamate + ATP = UDP-N-acetyl-alpha-D-muramoyl-L-alanyl-D-glutamate + ADP + phosphate + H(+)</text>
        <dbReference type="Rhea" id="RHEA:16429"/>
        <dbReference type="ChEBI" id="CHEBI:15378"/>
        <dbReference type="ChEBI" id="CHEBI:29986"/>
        <dbReference type="ChEBI" id="CHEBI:30616"/>
        <dbReference type="ChEBI" id="CHEBI:43474"/>
        <dbReference type="ChEBI" id="CHEBI:83898"/>
        <dbReference type="ChEBI" id="CHEBI:83900"/>
        <dbReference type="ChEBI" id="CHEBI:456216"/>
        <dbReference type="EC" id="6.3.2.9"/>
    </reaction>
</comment>
<comment type="pathway">
    <text evidence="1">Cell wall biogenesis; peptidoglycan biosynthesis.</text>
</comment>
<comment type="subcellular location">
    <subcellularLocation>
        <location evidence="1">Cytoplasm</location>
    </subcellularLocation>
</comment>
<comment type="similarity">
    <text evidence="1">Belongs to the MurCDEF family.</text>
</comment>
<accession>B6ELH7</accession>
<sequence length="442" mass="47611">MTGFGGVKNVVVVGLGMTGLSVVKHLLRQPEALIVKVIDTRETPPGQEQLPEQVELHSGSWQQDWLLDADLIVTNPGIALASSQLQPAIKKGTPVVGDIELFAWAVTAPVIAITGSNGKSTVTDLTGEMANAAGVKTAVGGNIGFAALDLLEQDADLYVLELSSFQLETTSSLKLKAAAFLNLSEDHMDRYQGMEDYRQAKLRVFDHADVCIVNRDDKETYPDTADKTLISFGFDTSDEYGCIEENGRLFLAKNNTPIIAANELGLVGKHNIANSLVALALLDAAGVNTNKTLDTLKRYNGLTHRCQVVAEMNGVRWVNDSKATNVASTLAALSGLSIEGKLHLLVGGVGKGADFSELSPALNELDLMMYCFGEDGVQFMPLDPRSRLCQTMDEAIELLSPELTFGDMVMLSPACASFDQYTNFMARGDAFTALAKHYSTEK</sequence>
<proteinExistence type="inferred from homology"/>
<evidence type="ECO:0000255" key="1">
    <source>
        <dbReference type="HAMAP-Rule" id="MF_00639"/>
    </source>
</evidence>
<name>MURD_ALISL</name>
<gene>
    <name evidence="1" type="primary">murD</name>
    <name type="ordered locus">VSAL_I2646</name>
</gene>
<reference key="1">
    <citation type="journal article" date="2008" name="BMC Genomics">
        <title>The genome sequence of the fish pathogen Aliivibrio salmonicida strain LFI1238 shows extensive evidence of gene decay.</title>
        <authorList>
            <person name="Hjerde E."/>
            <person name="Lorentzen M.S."/>
            <person name="Holden M.T."/>
            <person name="Seeger K."/>
            <person name="Paulsen S."/>
            <person name="Bason N."/>
            <person name="Churcher C."/>
            <person name="Harris D."/>
            <person name="Norbertczak H."/>
            <person name="Quail M.A."/>
            <person name="Sanders S."/>
            <person name="Thurston S."/>
            <person name="Parkhill J."/>
            <person name="Willassen N.P."/>
            <person name="Thomson N.R."/>
        </authorList>
    </citation>
    <scope>NUCLEOTIDE SEQUENCE [LARGE SCALE GENOMIC DNA]</scope>
    <source>
        <strain>LFI1238</strain>
    </source>
</reference>
<keyword id="KW-0067">ATP-binding</keyword>
<keyword id="KW-0131">Cell cycle</keyword>
<keyword id="KW-0132">Cell division</keyword>
<keyword id="KW-0133">Cell shape</keyword>
<keyword id="KW-0961">Cell wall biogenesis/degradation</keyword>
<keyword id="KW-0963">Cytoplasm</keyword>
<keyword id="KW-0436">Ligase</keyword>
<keyword id="KW-0547">Nucleotide-binding</keyword>
<keyword id="KW-0573">Peptidoglycan synthesis</keyword>
<protein>
    <recommendedName>
        <fullName evidence="1">UDP-N-acetylmuramoylalanine--D-glutamate ligase</fullName>
        <ecNumber evidence="1">6.3.2.9</ecNumber>
    </recommendedName>
    <alternativeName>
        <fullName evidence="1">D-glutamic acid-adding enzyme</fullName>
    </alternativeName>
    <alternativeName>
        <fullName evidence="1">UDP-N-acetylmuramoyl-L-alanyl-D-glutamate synthetase</fullName>
    </alternativeName>
</protein>
<feature type="chain" id="PRO_1000130823" description="UDP-N-acetylmuramoylalanine--D-glutamate ligase">
    <location>
        <begin position="1"/>
        <end position="442"/>
    </location>
</feature>
<feature type="binding site" evidence="1">
    <location>
        <begin position="115"/>
        <end position="121"/>
    </location>
    <ligand>
        <name>ATP</name>
        <dbReference type="ChEBI" id="CHEBI:30616"/>
    </ligand>
</feature>